<comment type="function">
    <text evidence="3 4 6">E3 ubiquitin-protein ligase that mediates ubiquitination and subsequent proteasomal degradation of the transcription factor ICE1. Acts as a negative regulator of cold signaling pathways (PubMed:16702557). Probably involved in recruiting the NUP107-160 subcomplex of the nuclear pore complex to chromatin (Probable). Controls flowering time in response to ambient temperatures (16 and 23 degrees Celsius) and intermittent cold, probably via the regulation of FT and TSF levels (PubMed:22960247).</text>
</comment>
<comment type="catalytic activity">
    <reaction>
        <text>S-ubiquitinyl-[E2 ubiquitin-conjugating enzyme]-L-cysteine + [acceptor protein]-L-lysine = [E2 ubiquitin-conjugating enzyme]-L-cysteine + N(6)-ubiquitinyl-[acceptor protein]-L-lysine.</text>
        <dbReference type="EC" id="2.3.2.27"/>
    </reaction>
</comment>
<comment type="pathway">
    <text>Protein modification; protein ubiquitination.</text>
</comment>
<comment type="subunit">
    <text evidence="3 4">Interacts with SCRM/ICE1, FLK and MSI4/FVE.</text>
</comment>
<comment type="interaction">
    <interactant intactId="EBI-15583242">
        <id>Q84JU6</id>
    </interactant>
    <interactant intactId="EBI-15583266">
        <id>Q9LSE2</id>
        <label>SCRM</label>
    </interactant>
    <organismsDiffer>false</organismsDiffer>
    <experiments>3</experiments>
</comment>
<comment type="subcellular location">
    <subcellularLocation>
        <location evidence="2 4">Nucleus</location>
    </subcellularLocation>
    <subcellularLocation>
        <location evidence="2 4">Cytoplasm</location>
    </subcellularLocation>
    <text evidence="2 4">Nuclear after cold treatment. Cytoplasmic when plant are grown or returned to normal growth temperatures.</text>
</comment>
<comment type="tissue specificity">
    <text evidence="2 4">Ubiquitously expressed with higher levels in leaf vasculature, roots and root tips.</text>
</comment>
<comment type="induction">
    <text evidence="2 4">Rapid and transient reduction of expression in response to brief cold treatment. After recovery, the level is maintained until 2 days after cold treatment, before declining again.</text>
</comment>
<comment type="domain">
    <text>The RING domain is required for E3 ubiquitin ligase activity.</text>
</comment>
<comment type="domain">
    <text>The C-terminal part of HOS1 is involved in the interaction with ICE1.</text>
</comment>
<comment type="disruption phenotype">
    <text evidence="4">Early flowering, and insensitivity to ambient temperature and to intermittent cold, but normal responses to vernalization and gibberellic acid.</text>
</comment>
<comment type="miscellaneous">
    <text>Loss-of-function mutation (hos1) in the gene shows an early flowering phenotype due to a constitutive vernalization and a reduced freezing tolerance without cold acclimation.</text>
</comment>
<comment type="sequence caution" evidence="5">
    <conflict type="erroneous gene model prediction">
        <sequence resource="EMBL-CDS" id="AAB87130"/>
    </conflict>
</comment>
<keyword id="KW-0963">Cytoplasm</keyword>
<keyword id="KW-0479">Metal-binding</keyword>
<keyword id="KW-0539">Nucleus</keyword>
<keyword id="KW-1185">Reference proteome</keyword>
<keyword id="KW-0716">Sensory transduction</keyword>
<keyword id="KW-0808">Transferase</keyword>
<keyword id="KW-0833">Ubl conjugation pathway</keyword>
<keyword id="KW-0862">Zinc</keyword>
<keyword id="KW-0863">Zinc-finger</keyword>
<reference key="1">
    <citation type="journal article" date="2001" name="Genes Dev.">
        <title>The Arabidopsis HOS1 gene negatively regulates cold signal transduction and encodes a RING finger protein that displays cold-regulated nucleo-cytoplasmic partitioning.</title>
        <authorList>
            <person name="Lee H."/>
            <person name="Xiong L."/>
            <person name="Gong Z."/>
            <person name="Ishitani M."/>
            <person name="Stevenson B."/>
            <person name="Zhu J.-K."/>
        </authorList>
    </citation>
    <scope>NUCLEOTIDE SEQUENCE [GENOMIC DNA / MRNA]</scope>
    <scope>INDUCTION</scope>
    <scope>SUBCELLULAR LOCATION</scope>
    <scope>TISSUE SPECIFICITY</scope>
</reference>
<reference key="2">
    <citation type="journal article" date="1999" name="Nature">
        <title>Sequence and analysis of chromosome 2 of the plant Arabidopsis thaliana.</title>
        <authorList>
            <person name="Lin X."/>
            <person name="Kaul S."/>
            <person name="Rounsley S.D."/>
            <person name="Shea T.P."/>
            <person name="Benito M.-I."/>
            <person name="Town C.D."/>
            <person name="Fujii C.Y."/>
            <person name="Mason T.M."/>
            <person name="Bowman C.L."/>
            <person name="Barnstead M.E."/>
            <person name="Feldblyum T.V."/>
            <person name="Buell C.R."/>
            <person name="Ketchum K.A."/>
            <person name="Lee J.J."/>
            <person name="Ronning C.M."/>
            <person name="Koo H.L."/>
            <person name="Moffat K.S."/>
            <person name="Cronin L.A."/>
            <person name="Shen M."/>
            <person name="Pai G."/>
            <person name="Van Aken S."/>
            <person name="Umayam L."/>
            <person name="Tallon L.J."/>
            <person name="Gill J.E."/>
            <person name="Adams M.D."/>
            <person name="Carrera A.J."/>
            <person name="Creasy T.H."/>
            <person name="Goodman H.M."/>
            <person name="Somerville C.R."/>
            <person name="Copenhaver G.P."/>
            <person name="Preuss D."/>
            <person name="Nierman W.C."/>
            <person name="White O."/>
            <person name="Eisen J.A."/>
            <person name="Salzberg S.L."/>
            <person name="Fraser C.M."/>
            <person name="Venter J.C."/>
        </authorList>
    </citation>
    <scope>NUCLEOTIDE SEQUENCE [LARGE SCALE GENOMIC DNA]</scope>
    <source>
        <strain>cv. Columbia</strain>
    </source>
</reference>
<reference key="3">
    <citation type="journal article" date="2017" name="Plant J.">
        <title>Araport11: a complete reannotation of the Arabidopsis thaliana reference genome.</title>
        <authorList>
            <person name="Cheng C.Y."/>
            <person name="Krishnakumar V."/>
            <person name="Chan A.P."/>
            <person name="Thibaud-Nissen F."/>
            <person name="Schobel S."/>
            <person name="Town C.D."/>
        </authorList>
    </citation>
    <scope>GENOME REANNOTATION</scope>
    <source>
        <strain>cv. Columbia</strain>
    </source>
</reference>
<reference key="4">
    <citation type="journal article" date="2003" name="Science">
        <title>Empirical analysis of transcriptional activity in the Arabidopsis genome.</title>
        <authorList>
            <person name="Yamada K."/>
            <person name="Lim J."/>
            <person name="Dale J.M."/>
            <person name="Chen H."/>
            <person name="Shinn P."/>
            <person name="Palm C.J."/>
            <person name="Southwick A.M."/>
            <person name="Wu H.C."/>
            <person name="Kim C.J."/>
            <person name="Nguyen M."/>
            <person name="Pham P.K."/>
            <person name="Cheuk R.F."/>
            <person name="Karlin-Newmann G."/>
            <person name="Liu S.X."/>
            <person name="Lam B."/>
            <person name="Sakano H."/>
            <person name="Wu T."/>
            <person name="Yu G."/>
            <person name="Miranda M."/>
            <person name="Quach H.L."/>
            <person name="Tripp M."/>
            <person name="Chang C.H."/>
            <person name="Lee J.M."/>
            <person name="Toriumi M.J."/>
            <person name="Chan M.M."/>
            <person name="Tang C.C."/>
            <person name="Onodera C.S."/>
            <person name="Deng J.M."/>
            <person name="Akiyama K."/>
            <person name="Ansari Y."/>
            <person name="Arakawa T."/>
            <person name="Banh J."/>
            <person name="Banno F."/>
            <person name="Bowser L."/>
            <person name="Brooks S.Y."/>
            <person name="Carninci P."/>
            <person name="Chao Q."/>
            <person name="Choy N."/>
            <person name="Enju A."/>
            <person name="Goldsmith A.D."/>
            <person name="Gurjal M."/>
            <person name="Hansen N.F."/>
            <person name="Hayashizaki Y."/>
            <person name="Johnson-Hopson C."/>
            <person name="Hsuan V.W."/>
            <person name="Iida K."/>
            <person name="Karnes M."/>
            <person name="Khan S."/>
            <person name="Koesema E."/>
            <person name="Ishida J."/>
            <person name="Jiang P.X."/>
            <person name="Jones T."/>
            <person name="Kawai J."/>
            <person name="Kamiya A."/>
            <person name="Meyers C."/>
            <person name="Nakajima M."/>
            <person name="Narusaka M."/>
            <person name="Seki M."/>
            <person name="Sakurai T."/>
            <person name="Satou M."/>
            <person name="Tamse R."/>
            <person name="Vaysberg M."/>
            <person name="Wallender E.K."/>
            <person name="Wong C."/>
            <person name="Yamamura Y."/>
            <person name="Yuan S."/>
            <person name="Shinozaki K."/>
            <person name="Davis R.W."/>
            <person name="Theologis A."/>
            <person name="Ecker J.R."/>
        </authorList>
    </citation>
    <scope>NUCLEOTIDE SEQUENCE [LARGE SCALE MRNA]</scope>
    <source>
        <strain>cv. Columbia</strain>
    </source>
</reference>
<reference key="5">
    <citation type="journal article" date="2006" name="Proc. Natl. Acad. Sci. U.S.A.">
        <title>The negative regulator of plant cold responses, HOS1, is a RING E3 ligase that mediates the ubiquitination and degradation of ICE1.</title>
        <authorList>
            <person name="Dong C.H."/>
            <person name="Agarwal M."/>
            <person name="Zhang Y."/>
            <person name="Xie Q."/>
            <person name="Zhu J.K."/>
        </authorList>
    </citation>
    <scope>FUNCTION</scope>
    <scope>MUTAGENESIS OF HIS-75 AND CYS-89</scope>
    <scope>INTERACTION WITH ICE1</scope>
</reference>
<reference key="6">
    <citation type="journal article" date="2009" name="J. Proteomics">
        <title>Phosphoproteomic analysis of nuclei-enriched fractions from Arabidopsis thaliana.</title>
        <authorList>
            <person name="Jones A.M.E."/>
            <person name="MacLean D."/>
            <person name="Studholme D.J."/>
            <person name="Serna-Sanz A."/>
            <person name="Andreasson E."/>
            <person name="Rathjen J.P."/>
            <person name="Peck S.C."/>
        </authorList>
    </citation>
    <scope>IDENTIFICATION BY MASS SPECTROMETRY [LARGE SCALE ANALYSIS]</scope>
    <source>
        <strain>cv. Columbia</strain>
    </source>
</reference>
<reference key="7">
    <citation type="journal article" date="2009" name="Plant Physiol.">
        <title>Large-scale Arabidopsis phosphoproteome profiling reveals novel chloroplast kinase substrates and phosphorylation networks.</title>
        <authorList>
            <person name="Reiland S."/>
            <person name="Messerli G."/>
            <person name="Baerenfaller K."/>
            <person name="Gerrits B."/>
            <person name="Endler A."/>
            <person name="Grossmann J."/>
            <person name="Gruissem W."/>
            <person name="Baginsky S."/>
        </authorList>
    </citation>
    <scope>IDENTIFICATION BY MASS SPECTROMETRY [LARGE SCALE ANALYSIS]</scope>
</reference>
<reference key="8">
    <citation type="journal article" date="2010" name="Plant Cell">
        <title>Identification and characterization of nuclear pore complex components in Arabidopsis thaliana.</title>
        <authorList>
            <person name="Tamura K."/>
            <person name="Fukao Y."/>
            <person name="Iwamoto M."/>
            <person name="Haraguchi T."/>
            <person name="Hara-Nishimura I."/>
        </authorList>
    </citation>
    <scope>IDENTIFICATION IN THE NUCLEAR PORE COMPLEX BY MASS SPECTROMETRY</scope>
    <scope>FUNCTION</scope>
</reference>
<reference key="9">
    <citation type="journal article" date="2012" name="Plant Cell Physiol.">
        <title>The E3 ubiquitin ligase HOS1 regulates low ambient temperature-responsive flowering in Arabidopsis thaliana.</title>
        <authorList>
            <person name="Lee J.H."/>
            <person name="Kim J.J."/>
            <person name="Kim S.H."/>
            <person name="Cho H.J."/>
            <person name="Kim J."/>
            <person name="Ahn J.H."/>
        </authorList>
    </citation>
    <scope>FUNCTION</scope>
    <scope>DISRUPTION PHENOTYPE</scope>
    <scope>INTERACTION WITH FLK; MSI4/FVE AND SCRM/ICE1</scope>
    <scope>SUBCELLULAR LOCATION</scope>
    <scope>TISSUE SPECIFICITY</scope>
    <scope>INDUCTION BY INTERMITTENT COLD</scope>
    <source>
        <strain>cv. C24</strain>
        <strain>cv. Columbia</strain>
    </source>
</reference>
<feature type="chain" id="PRO_0000248162" description="E3 ubiquitin-protein ligase HOS1">
    <location>
        <begin position="1"/>
        <end position="927"/>
    </location>
</feature>
<feature type="zinc finger region" description="RING-type; degenerate">
    <location>
        <begin position="53"/>
        <end position="93"/>
    </location>
</feature>
<feature type="region of interest" description="Disordered" evidence="1">
    <location>
        <begin position="678"/>
        <end position="699"/>
    </location>
</feature>
<feature type="region of interest" description="Disordered" evidence="1">
    <location>
        <begin position="782"/>
        <end position="806"/>
    </location>
</feature>
<feature type="region of interest" description="Disordered" evidence="1">
    <location>
        <begin position="832"/>
        <end position="927"/>
    </location>
</feature>
<feature type="compositionally biased region" description="Basic and acidic residues" evidence="1">
    <location>
        <begin position="797"/>
        <end position="806"/>
    </location>
</feature>
<feature type="compositionally biased region" description="Polar residues" evidence="1">
    <location>
        <begin position="832"/>
        <end position="851"/>
    </location>
</feature>
<feature type="compositionally biased region" description="Polar residues" evidence="1">
    <location>
        <begin position="878"/>
        <end position="892"/>
    </location>
</feature>
<feature type="compositionally biased region" description="Basic residues" evidence="1">
    <location>
        <begin position="917"/>
        <end position="927"/>
    </location>
</feature>
<feature type="mutagenesis site" description="Loss of E3 ligase activity." evidence="3">
    <original>H</original>
    <variation>Y</variation>
    <location>
        <position position="75"/>
    </location>
</feature>
<feature type="mutagenesis site" description="Loss of E3 ligase activity." evidence="3">
    <original>C</original>
    <variation>S</variation>
    <location>
        <position position="89"/>
    </location>
</feature>
<organism>
    <name type="scientific">Arabidopsis thaliana</name>
    <name type="common">Mouse-ear cress</name>
    <dbReference type="NCBI Taxonomy" id="3702"/>
    <lineage>
        <taxon>Eukaryota</taxon>
        <taxon>Viridiplantae</taxon>
        <taxon>Streptophyta</taxon>
        <taxon>Embryophyta</taxon>
        <taxon>Tracheophyta</taxon>
        <taxon>Spermatophyta</taxon>
        <taxon>Magnoliopsida</taxon>
        <taxon>eudicotyledons</taxon>
        <taxon>Gunneridae</taxon>
        <taxon>Pentapetalae</taxon>
        <taxon>rosids</taxon>
        <taxon>malvids</taxon>
        <taxon>Brassicales</taxon>
        <taxon>Brassicaceae</taxon>
        <taxon>Camelineae</taxon>
        <taxon>Arabidopsis</taxon>
    </lineage>
</organism>
<protein>
    <recommendedName>
        <fullName>E3 ubiquitin-protein ligase HOS1</fullName>
        <ecNumber>2.3.2.27</ecNumber>
    </recommendedName>
    <alternativeName>
        <fullName>Protein HIGH EXPRESSION OF OSMOTICALLY RESPONSIVE GENE 1</fullName>
    </alternativeName>
    <alternativeName>
        <fullName>RING finger protein HOS1</fullName>
    </alternativeName>
    <alternativeName>
        <fullName evidence="5">RING-type E3 ubiquitin transferase HOS1</fullName>
    </alternativeName>
</protein>
<name>HOS1_ARATH</name>
<dbReference type="EC" id="2.3.2.27"/>
<dbReference type="EMBL" id="AC003000">
    <property type="protein sequence ID" value="AAB87130.1"/>
    <property type="status" value="ALT_SEQ"/>
    <property type="molecule type" value="Genomic_DNA"/>
</dbReference>
<dbReference type="EMBL" id="CP002685">
    <property type="protein sequence ID" value="AEC09734.1"/>
    <property type="molecule type" value="Genomic_DNA"/>
</dbReference>
<dbReference type="EMBL" id="BT004255">
    <property type="protein sequence ID" value="AAO42259.1"/>
    <property type="molecule type" value="mRNA"/>
</dbReference>
<dbReference type="EMBL" id="BT005517">
    <property type="protein sequence ID" value="AAO63937.1"/>
    <property type="molecule type" value="mRNA"/>
</dbReference>
<dbReference type="PIR" id="T01011">
    <property type="entry name" value="T01011"/>
</dbReference>
<dbReference type="RefSeq" id="NP_181511.3">
    <property type="nucleotide sequence ID" value="NM_129540.5"/>
</dbReference>
<dbReference type="SMR" id="Q84JU6"/>
<dbReference type="BioGRID" id="3906">
    <property type="interactions" value="18"/>
</dbReference>
<dbReference type="DIP" id="DIP-61174N"/>
<dbReference type="FunCoup" id="Q84JU6">
    <property type="interactions" value="2797"/>
</dbReference>
<dbReference type="IntAct" id="Q84JU6">
    <property type="interactions" value="1"/>
</dbReference>
<dbReference type="STRING" id="3702.Q84JU6"/>
<dbReference type="iPTMnet" id="Q84JU6"/>
<dbReference type="PaxDb" id="3702-AT2G39810.1"/>
<dbReference type="ProteomicsDB" id="230248"/>
<dbReference type="EnsemblPlants" id="AT2G39810.1">
    <property type="protein sequence ID" value="AT2G39810.1"/>
    <property type="gene ID" value="AT2G39810"/>
</dbReference>
<dbReference type="GeneID" id="818568"/>
<dbReference type="Gramene" id="AT2G39810.1">
    <property type="protein sequence ID" value="AT2G39810.1"/>
    <property type="gene ID" value="AT2G39810"/>
</dbReference>
<dbReference type="KEGG" id="ath:AT2G39810"/>
<dbReference type="Araport" id="AT2G39810"/>
<dbReference type="TAIR" id="AT2G39810">
    <property type="gene designation" value="HOS1"/>
</dbReference>
<dbReference type="eggNOG" id="ENOG502QUFI">
    <property type="taxonomic scope" value="Eukaryota"/>
</dbReference>
<dbReference type="HOGENOM" id="CLU_013617_0_0_1"/>
<dbReference type="InParanoid" id="Q84JU6"/>
<dbReference type="OrthoDB" id="20729at2759"/>
<dbReference type="PhylomeDB" id="Q84JU6"/>
<dbReference type="UniPathway" id="UPA00143"/>
<dbReference type="CD-CODE" id="4299E36E">
    <property type="entry name" value="Nucleolus"/>
</dbReference>
<dbReference type="PRO" id="PR:Q84JU6"/>
<dbReference type="Proteomes" id="UP000006548">
    <property type="component" value="Chromosome 2"/>
</dbReference>
<dbReference type="ExpressionAtlas" id="Q84JU6">
    <property type="expression patterns" value="baseline and differential"/>
</dbReference>
<dbReference type="GO" id="GO:0005737">
    <property type="term" value="C:cytoplasm"/>
    <property type="evidence" value="ECO:0000314"/>
    <property type="project" value="UniProtKB"/>
</dbReference>
<dbReference type="GO" id="GO:0005634">
    <property type="term" value="C:nucleus"/>
    <property type="evidence" value="ECO:0000314"/>
    <property type="project" value="UniProtKB"/>
</dbReference>
<dbReference type="GO" id="GO:0004842">
    <property type="term" value="F:ubiquitin-protein transferase activity"/>
    <property type="evidence" value="ECO:0000314"/>
    <property type="project" value="TAIR"/>
</dbReference>
<dbReference type="GO" id="GO:0008270">
    <property type="term" value="F:zinc ion binding"/>
    <property type="evidence" value="ECO:0007669"/>
    <property type="project" value="UniProtKB-KW"/>
</dbReference>
<dbReference type="GO" id="GO:0045892">
    <property type="term" value="P:negative regulation of DNA-templated transcription"/>
    <property type="evidence" value="ECO:0000270"/>
    <property type="project" value="TAIR"/>
</dbReference>
<dbReference type="GO" id="GO:0016567">
    <property type="term" value="P:protein ubiquitination"/>
    <property type="evidence" value="ECO:0000314"/>
    <property type="project" value="TAIR"/>
</dbReference>
<dbReference type="GO" id="GO:0009409">
    <property type="term" value="P:response to cold"/>
    <property type="evidence" value="ECO:0000315"/>
    <property type="project" value="UniProtKB"/>
</dbReference>
<dbReference type="GO" id="GO:0010228">
    <property type="term" value="P:vegetative to reproductive phase transition of meristem"/>
    <property type="evidence" value="ECO:0000315"/>
    <property type="project" value="UniProtKB"/>
</dbReference>
<dbReference type="Gene3D" id="3.30.40.10">
    <property type="entry name" value="Zinc/RING finger domain, C3HC4 (zinc finger)"/>
    <property type="match status" value="1"/>
</dbReference>
<dbReference type="InterPro" id="IPR025151">
    <property type="entry name" value="ELYS_dom"/>
</dbReference>
<dbReference type="InterPro" id="IPR044718">
    <property type="entry name" value="HOS1"/>
</dbReference>
<dbReference type="InterPro" id="IPR013083">
    <property type="entry name" value="Znf_RING/FYVE/PHD"/>
</dbReference>
<dbReference type="PANTHER" id="PTHR47358">
    <property type="entry name" value="E3 UBIQUITIN-PROTEIN LIGASE HOS1"/>
    <property type="match status" value="1"/>
</dbReference>
<dbReference type="PANTHER" id="PTHR47358:SF2">
    <property type="entry name" value="E3 UBIQUITIN-PROTEIN LIGASE HOS1"/>
    <property type="match status" value="1"/>
</dbReference>
<dbReference type="Pfam" id="PF13934">
    <property type="entry name" value="ELYS"/>
    <property type="match status" value="1"/>
</dbReference>
<accession>Q84JU6</accession>
<accession>O22289</accession>
<proteinExistence type="evidence at protein level"/>
<sequence length="927" mass="105229">MDTREINGFASAARSISLPTQPNYSSKPVQEALKHLASINLRELCNEAKVERCRATRDLASCGRFVNYVLNPCGHASLCTECCQRCDVCPICRSTLPKFGDRLRLRLYYECVEAGLISRTHEEASQDSDEDEHQLAADVHRLYSLFDVAMNNNLISVVCHYITNVCMDETAVSSDPVIAFLLDEVVVKDWVKRTFRSTLAELQEIYNLETKEMQAWLDKLLRCSKQVAGICSVLEVMESAFKGSVSPQLQDVQTLRENIGKTKQHLDIMVWCIRHGFLDDVRSRYSNFTSWNALVGERKSNAVKRAWPDAVDQSSDCSVQSASLFIEDALENLEREPEYSQEIGADLEVGRLQKDKRSFLRSKIEGTSGSYPFENLRTAADMLFLHGGSDLVVAKQAIFLYYLFDRHWTTPEKYWKHTIDDFAATFGITRHSLLESFVFYLLDDHSEEALQEACRILPEICGPETYPKVAQVLLERDNPETALMVLRWSGRDGVSELVSIGEAVTALRVRVECGLLSEAFTYQRTLCLKVKENNLKNGAVKHASDDLDIWSWTEWMEILVNEFCCLSIRRNLVDRIIELPWNPDEEKYLHRCLLDSATDDPSSAVGSLLVVFYLQRYRYIQAYQVDLRLQKIEEAFVSDNQIGEEVMFRMRSQSHWRKELVDRAIDILPVIQQQQVRSGQFSEMEDASEGAKKSDLPDAPDMITSSVPFATTNSVFLQSANNARAREPVANNGSPFQPGHMIGNASHDLSHGRLFTNANRGQKSEVRSVTKNLKFGEMSTPFKDLNRARGNSQLQGKRTEESSPEVNVDRYIENNMSSPYLRRITANNPVTVKSSSNHLNGSSQKPESTFFGTRMQPDKDNFVDLDDPMDMSSSLKDNNNNVLATESRNNSGGLRWRSDETSDDEDELTSFGSMPVKGRRRRRFAAR</sequence>
<gene>
    <name type="primary">HOS1</name>
    <name type="ordered locus">At2g39810</name>
    <name type="ORF">T5I7.11</name>
</gene>
<evidence type="ECO:0000256" key="1">
    <source>
        <dbReference type="SAM" id="MobiDB-lite"/>
    </source>
</evidence>
<evidence type="ECO:0000269" key="2">
    <source>
    </source>
</evidence>
<evidence type="ECO:0000269" key="3">
    <source>
    </source>
</evidence>
<evidence type="ECO:0000269" key="4">
    <source>
    </source>
</evidence>
<evidence type="ECO:0000305" key="5"/>
<evidence type="ECO:0000305" key="6">
    <source>
    </source>
</evidence>